<reference key="1">
    <citation type="journal article" date="1990" name="Virology">
        <title>Identification and sequencing of the spheroidin gene of Choristoneura biennis entomopoxvirus.</title>
        <authorList>
            <person name="Yuen L."/>
            <person name="Dionne J."/>
            <person name="Arif B."/>
            <person name="Richardson C."/>
        </authorList>
    </citation>
    <scope>NUCLEOTIDE SEQUENCE [GENOMIC DNA]</scope>
    <scope>PROTEIN SEQUENCE OF 21-50</scope>
    <scope>PRELIMINARY FUNCTION</scope>
</reference>
<reference key="2">
    <citation type="journal article" date="1993" name="J. Gen. Virol.">
        <title>A gene encoding a highly expressed spindle body protein of Heliothis armigera entomopoxvirus.</title>
        <authorList>
            <person name="Dall D."/>
            <person name="Sriskantha A."/>
            <person name="Vera A."/>
            <person name="Lai-Fook J."/>
            <person name="Symonds T."/>
        </authorList>
    </citation>
    <scope>FUNCTION</scope>
</reference>
<dbReference type="EMBL" id="M34140">
    <property type="protein sequence ID" value="AAA42887.1"/>
    <property type="molecule type" value="Genomic_DNA"/>
</dbReference>
<dbReference type="PIR" id="A34743">
    <property type="entry name" value="PYVZCB"/>
</dbReference>
<dbReference type="RefSeq" id="YP_008004371.1">
    <property type="nucleotide sequence ID" value="NC_021248.1"/>
</dbReference>
<dbReference type="SMR" id="P23061"/>
<dbReference type="CAZy" id="AA10">
    <property type="family name" value="Auxiliary Activities 10"/>
</dbReference>
<dbReference type="KEGG" id="vg:15613291"/>
<dbReference type="OrthoDB" id="8547at10239"/>
<dbReference type="Gene3D" id="2.70.50.50">
    <property type="entry name" value="chitin-binding protein cbp21"/>
    <property type="match status" value="1"/>
</dbReference>
<dbReference type="InterPro" id="IPR004302">
    <property type="entry name" value="Cellulose/chitin-bd_N"/>
</dbReference>
<dbReference type="InterPro" id="IPR051024">
    <property type="entry name" value="GlcNAc_Chitin_IntDeg"/>
</dbReference>
<dbReference type="InterPro" id="IPR014756">
    <property type="entry name" value="Ig_E-set"/>
</dbReference>
<dbReference type="PANTHER" id="PTHR34823:SF1">
    <property type="entry name" value="CHITIN-BINDING TYPE-4 DOMAIN-CONTAINING PROTEIN"/>
    <property type="match status" value="1"/>
</dbReference>
<dbReference type="PANTHER" id="PTHR34823">
    <property type="entry name" value="GLCNAC-BINDING PROTEIN A"/>
    <property type="match status" value="1"/>
</dbReference>
<dbReference type="Pfam" id="PF03067">
    <property type="entry name" value="LPMO_10"/>
    <property type="match status" value="1"/>
</dbReference>
<dbReference type="SUPFAM" id="SSF81296">
    <property type="entry name" value="E set domains"/>
    <property type="match status" value="1"/>
</dbReference>
<gene>
    <name type="primary">SPH</name>
</gene>
<protein>
    <recommendedName>
        <fullName>Spindolin</fullName>
    </recommendedName>
    <alternativeName>
        <fullName>Spheroidin</fullName>
    </alternativeName>
    <alternativeName>
        <fullName>p50</fullName>
    </alternativeName>
</protein>
<name>SPIN_CBEPV</name>
<organism>
    <name type="scientific">Choristoneura biennis entomopoxvirus</name>
    <name type="common">CbEPV</name>
    <dbReference type="NCBI Taxonomy" id="10288"/>
    <lineage>
        <taxon>Viruses</taxon>
        <taxon>Varidnaviria</taxon>
        <taxon>Bamfordvirae</taxon>
        <taxon>Nucleocytoviricota</taxon>
        <taxon>Pokkesviricetes</taxon>
        <taxon>Chitovirales</taxon>
        <taxon>Poxviridae</taxon>
        <taxon>Entomopoxvirinae</taxon>
        <taxon>Betaentomopoxvirus</taxon>
    </lineage>
</organism>
<organismHost>
    <name type="scientific">Choristoneura fumiferana</name>
    <name type="common">Spruce budworm moth</name>
    <name type="synonym">Archips fumiferana</name>
    <dbReference type="NCBI Taxonomy" id="7141"/>
</organismHost>
<feature type="signal peptide" evidence="1">
    <location>
        <begin position="1"/>
        <end position="20"/>
    </location>
</feature>
<feature type="chain" id="PRO_0000040618" description="Spindolin">
    <location>
        <begin position="21"/>
        <end position="341"/>
    </location>
</feature>
<sequence>MNKLILISLIASLYQVEVDAHGYMTFPIARQRRCSAAGGNWYPVGGGGIQDPMCRAAYQNVFNKVLNSNGGDVIDASEAANYMYTQDNEYAALAGPDYTNICHIQQRVVPSYLCAAGASDWSIRPFGDKSGMDLPGSWTPTIIQLSDNQQSNVVMELEFCPTAVHDPSYYEVYITNPSFNVYTDNVVWANLDLIYNNTVTLRPKLPESTCAANSMVYRFEVSIPVRPSQFVLYVRWQRIDPVGEGFYNCVDMKFKYSEGPDEEDIIEPEYEVDNEAECFAYRTNSGNVNVNPLQENKYMAYANKAIRNINTHSNGCSRNRNNKNNYNKYYSKTYNYNQNRK</sequence>
<accession>P23061</accession>
<evidence type="ECO:0000269" key="1">
    <source>
    </source>
</evidence>
<evidence type="ECO:0000269" key="2">
    <source>
    </source>
</evidence>
<evidence type="ECO:0000305" key="3">
    <source>
    </source>
</evidence>
<proteinExistence type="evidence at protein level"/>
<keyword id="KW-0903">Direct protein sequencing</keyword>
<keyword id="KW-1015">Disulfide bond</keyword>
<keyword id="KW-0426">Late protein</keyword>
<keyword id="KW-0732">Signal</keyword>
<comment type="function">
    <text evidence="2">This protein is a spindle body protein.</text>
</comment>
<comment type="subunit">
    <text>Homodimer; disulfide-linked.</text>
</comment>
<comment type="caution">
    <text evidence="3">Was originally thought to be a spheroidin.</text>
</comment>